<name>ATPB_LICGR</name>
<dbReference type="EC" id="7.1.2.2" evidence="1"/>
<dbReference type="EMBL" id="AY012405">
    <property type="protein sequence ID" value="AAK14660.1"/>
    <property type="molecule type" value="Genomic_DNA"/>
</dbReference>
<dbReference type="SMR" id="Q7HHY7"/>
<dbReference type="GO" id="GO:0009535">
    <property type="term" value="C:chloroplast thylakoid membrane"/>
    <property type="evidence" value="ECO:0007669"/>
    <property type="project" value="UniProtKB-SubCell"/>
</dbReference>
<dbReference type="GO" id="GO:0005739">
    <property type="term" value="C:mitochondrion"/>
    <property type="evidence" value="ECO:0007669"/>
    <property type="project" value="GOC"/>
</dbReference>
<dbReference type="GO" id="GO:0045259">
    <property type="term" value="C:proton-transporting ATP synthase complex"/>
    <property type="evidence" value="ECO:0007669"/>
    <property type="project" value="UniProtKB-KW"/>
</dbReference>
<dbReference type="GO" id="GO:0005524">
    <property type="term" value="F:ATP binding"/>
    <property type="evidence" value="ECO:0007669"/>
    <property type="project" value="UniProtKB-UniRule"/>
</dbReference>
<dbReference type="GO" id="GO:0016887">
    <property type="term" value="F:ATP hydrolysis activity"/>
    <property type="evidence" value="ECO:0007669"/>
    <property type="project" value="InterPro"/>
</dbReference>
<dbReference type="GO" id="GO:0046933">
    <property type="term" value="F:proton-transporting ATP synthase activity, rotational mechanism"/>
    <property type="evidence" value="ECO:0007669"/>
    <property type="project" value="UniProtKB-UniRule"/>
</dbReference>
<dbReference type="GO" id="GO:0042776">
    <property type="term" value="P:proton motive force-driven mitochondrial ATP synthesis"/>
    <property type="evidence" value="ECO:0007669"/>
    <property type="project" value="TreeGrafter"/>
</dbReference>
<dbReference type="CDD" id="cd18110">
    <property type="entry name" value="ATP-synt_F1_beta_C"/>
    <property type="match status" value="1"/>
</dbReference>
<dbReference type="CDD" id="cd18115">
    <property type="entry name" value="ATP-synt_F1_beta_N"/>
    <property type="match status" value="1"/>
</dbReference>
<dbReference type="CDD" id="cd01133">
    <property type="entry name" value="F1-ATPase_beta_CD"/>
    <property type="match status" value="1"/>
</dbReference>
<dbReference type="FunFam" id="1.10.1140.10:FF:000001">
    <property type="entry name" value="ATP synthase subunit beta"/>
    <property type="match status" value="1"/>
</dbReference>
<dbReference type="FunFam" id="3.40.50.12240:FF:000006">
    <property type="entry name" value="ATP synthase subunit beta"/>
    <property type="match status" value="1"/>
</dbReference>
<dbReference type="FunFam" id="3.40.50.300:FF:000004">
    <property type="entry name" value="ATP synthase subunit beta"/>
    <property type="match status" value="1"/>
</dbReference>
<dbReference type="FunFam" id="2.40.10.170:FF:000002">
    <property type="entry name" value="ATP synthase subunit beta, chloroplastic"/>
    <property type="match status" value="1"/>
</dbReference>
<dbReference type="Gene3D" id="2.40.10.170">
    <property type="match status" value="1"/>
</dbReference>
<dbReference type="Gene3D" id="1.10.1140.10">
    <property type="entry name" value="Bovine Mitochondrial F1-atpase, Atp Synthase Beta Chain, Chain D, domain 3"/>
    <property type="match status" value="1"/>
</dbReference>
<dbReference type="Gene3D" id="3.40.50.300">
    <property type="entry name" value="P-loop containing nucleotide triphosphate hydrolases"/>
    <property type="match status" value="1"/>
</dbReference>
<dbReference type="HAMAP" id="MF_01347">
    <property type="entry name" value="ATP_synth_beta_bact"/>
    <property type="match status" value="1"/>
</dbReference>
<dbReference type="InterPro" id="IPR003593">
    <property type="entry name" value="AAA+_ATPase"/>
</dbReference>
<dbReference type="InterPro" id="IPR055190">
    <property type="entry name" value="ATP-synt_VA_C"/>
</dbReference>
<dbReference type="InterPro" id="IPR005722">
    <property type="entry name" value="ATP_synth_F1_bsu"/>
</dbReference>
<dbReference type="InterPro" id="IPR020003">
    <property type="entry name" value="ATPase_a/bsu_AS"/>
</dbReference>
<dbReference type="InterPro" id="IPR050053">
    <property type="entry name" value="ATPase_alpha/beta_chains"/>
</dbReference>
<dbReference type="InterPro" id="IPR004100">
    <property type="entry name" value="ATPase_F1/V1/A1_a/bsu_N"/>
</dbReference>
<dbReference type="InterPro" id="IPR036121">
    <property type="entry name" value="ATPase_F1/V1/A1_a/bsu_N_sf"/>
</dbReference>
<dbReference type="InterPro" id="IPR000194">
    <property type="entry name" value="ATPase_F1/V1/A1_a/bsu_nucl-bd"/>
</dbReference>
<dbReference type="InterPro" id="IPR024034">
    <property type="entry name" value="ATPase_F1/V1_b/a_C"/>
</dbReference>
<dbReference type="InterPro" id="IPR027417">
    <property type="entry name" value="P-loop_NTPase"/>
</dbReference>
<dbReference type="NCBIfam" id="TIGR01039">
    <property type="entry name" value="atpD"/>
    <property type="match status" value="1"/>
</dbReference>
<dbReference type="PANTHER" id="PTHR15184">
    <property type="entry name" value="ATP SYNTHASE"/>
    <property type="match status" value="1"/>
</dbReference>
<dbReference type="PANTHER" id="PTHR15184:SF71">
    <property type="entry name" value="ATP SYNTHASE SUBUNIT BETA, MITOCHONDRIAL"/>
    <property type="match status" value="1"/>
</dbReference>
<dbReference type="Pfam" id="PF00006">
    <property type="entry name" value="ATP-synt_ab"/>
    <property type="match status" value="1"/>
</dbReference>
<dbReference type="Pfam" id="PF02874">
    <property type="entry name" value="ATP-synt_ab_N"/>
    <property type="match status" value="1"/>
</dbReference>
<dbReference type="Pfam" id="PF22919">
    <property type="entry name" value="ATP-synt_VA_C"/>
    <property type="match status" value="1"/>
</dbReference>
<dbReference type="SMART" id="SM00382">
    <property type="entry name" value="AAA"/>
    <property type="match status" value="1"/>
</dbReference>
<dbReference type="SUPFAM" id="SSF47917">
    <property type="entry name" value="C-terminal domain of alpha and beta subunits of F1 ATP synthase"/>
    <property type="match status" value="1"/>
</dbReference>
<dbReference type="SUPFAM" id="SSF50615">
    <property type="entry name" value="N-terminal domain of alpha and beta subunits of F1 ATP synthase"/>
    <property type="match status" value="1"/>
</dbReference>
<dbReference type="SUPFAM" id="SSF52540">
    <property type="entry name" value="P-loop containing nucleoside triphosphate hydrolases"/>
    <property type="match status" value="1"/>
</dbReference>
<dbReference type="PROSITE" id="PS00152">
    <property type="entry name" value="ATPASE_ALPHA_BETA"/>
    <property type="match status" value="1"/>
</dbReference>
<organism>
    <name type="scientific">Licuala grandis</name>
    <name type="common">Ruffled fan palm</name>
    <name type="synonym">Pritchardia grandis</name>
    <dbReference type="NCBI Taxonomy" id="145694"/>
    <lineage>
        <taxon>Eukaryota</taxon>
        <taxon>Viridiplantae</taxon>
        <taxon>Streptophyta</taxon>
        <taxon>Embryophyta</taxon>
        <taxon>Tracheophyta</taxon>
        <taxon>Spermatophyta</taxon>
        <taxon>Magnoliopsida</taxon>
        <taxon>Liliopsida</taxon>
        <taxon>Arecaceae</taxon>
        <taxon>Coryphoideae</taxon>
        <taxon>Livistoneae</taxon>
        <taxon>Livistoninae</taxon>
        <taxon>Licuala</taxon>
    </lineage>
</organism>
<comment type="function">
    <text evidence="1">Produces ATP from ADP in the presence of a proton gradient across the membrane. The catalytic sites are hosted primarily by the beta subunits.</text>
</comment>
<comment type="catalytic activity">
    <reaction evidence="1">
        <text>ATP + H2O + 4 H(+)(in) = ADP + phosphate + 5 H(+)(out)</text>
        <dbReference type="Rhea" id="RHEA:57720"/>
        <dbReference type="ChEBI" id="CHEBI:15377"/>
        <dbReference type="ChEBI" id="CHEBI:15378"/>
        <dbReference type="ChEBI" id="CHEBI:30616"/>
        <dbReference type="ChEBI" id="CHEBI:43474"/>
        <dbReference type="ChEBI" id="CHEBI:456216"/>
        <dbReference type="EC" id="7.1.2.2"/>
    </reaction>
</comment>
<comment type="subunit">
    <text evidence="1">F-type ATPases have 2 components, CF(1) - the catalytic core - and CF(0) - the membrane proton channel. CF(1) has five subunits: alpha(3), beta(3), gamma(1), delta(1), epsilon(1). CF(0) has four main subunits: a(1), b(1), b'(1) and c(9-12).</text>
</comment>
<comment type="subcellular location">
    <subcellularLocation>
        <location evidence="1">Plastid</location>
        <location evidence="1">Chloroplast thylakoid membrane</location>
        <topology evidence="1">Peripheral membrane protein</topology>
    </subcellularLocation>
</comment>
<comment type="similarity">
    <text evidence="1">Belongs to the ATPase alpha/beta chains family.</text>
</comment>
<proteinExistence type="inferred from homology"/>
<feature type="chain" id="PRO_0000254494" description="ATP synthase subunit beta, chloroplastic">
    <location>
        <begin position="1"/>
        <end position="498"/>
    </location>
</feature>
<feature type="binding site" evidence="1">
    <location>
        <begin position="172"/>
        <end position="179"/>
    </location>
    <ligand>
        <name>ATP</name>
        <dbReference type="ChEBI" id="CHEBI:30616"/>
    </ligand>
</feature>
<keyword id="KW-0066">ATP synthesis</keyword>
<keyword id="KW-0067">ATP-binding</keyword>
<keyword id="KW-0139">CF(1)</keyword>
<keyword id="KW-0150">Chloroplast</keyword>
<keyword id="KW-0375">Hydrogen ion transport</keyword>
<keyword id="KW-0406">Ion transport</keyword>
<keyword id="KW-0472">Membrane</keyword>
<keyword id="KW-0547">Nucleotide-binding</keyword>
<keyword id="KW-0934">Plastid</keyword>
<keyword id="KW-0793">Thylakoid</keyword>
<keyword id="KW-1278">Translocase</keyword>
<keyword id="KW-0813">Transport</keyword>
<gene>
    <name evidence="1" type="primary">atpB</name>
</gene>
<accession>Q7HHY7</accession>
<protein>
    <recommendedName>
        <fullName evidence="1">ATP synthase subunit beta, chloroplastic</fullName>
        <ecNumber evidence="1">7.1.2.2</ecNumber>
    </recommendedName>
    <alternativeName>
        <fullName evidence="1">ATP synthase F1 sector subunit beta</fullName>
    </alternativeName>
    <alternativeName>
        <fullName evidence="1">F-ATPase subunit beta</fullName>
    </alternativeName>
</protein>
<geneLocation type="chloroplast"/>
<evidence type="ECO:0000255" key="1">
    <source>
        <dbReference type="HAMAP-Rule" id="MF_01347"/>
    </source>
</evidence>
<sequence length="498" mass="53800">MRINPTTSSPVVSTLEEKNLGRIAQIIGPVLDVVFPPGKMPNIYNALVVKGRDTVGQQINVTCEVQQLLGNNRVRAVAMSATDGLMRGMEVIDTGAPLSVPVGGATLGRIFNVLGEPVDNLGPVDTRTTSPIHRSAPAFIQLDTKLSIFETGIKVVDLLAPYRRGGKIGLFGGAGVGKTVLIMELINNIAKAHGGVSVFGGVGERTREGNDLYMEMKESGVINEKNIAESKVALVYGQMNEPPGARMRVGLTALTMAEYFRDVNEQDVLLFIDNIFRFVQAGSEVSALLGRMPSAVGYQPTLSTEMGSLQERITSTKEGSITSIQAVYVPADDLTDPAPATTFSHLDATTVLSRVLAAKGIYPAVDPLDSTSTMLQPRIVGEEHYETAQRVKQTSQRYKELQDIIAILGLDELSEEDRLTVARARKIERFLSQPFFVAEVFTGSPGKYVGLGETIRGFQLILSGELDGLPEQAFYLVGNIDEATAKAMNLEVESKLKK</sequence>
<reference key="1">
    <citation type="journal article" date="2002" name="Syst. Biol.">
        <title>A molecular phylogenetic study of the Palmae (Arecaceae) based on atpB, rbcL, and 18S nrDNA sequences.</title>
        <authorList>
            <person name="Hahn W.J."/>
        </authorList>
    </citation>
    <scope>NUCLEOTIDE SEQUENCE [GENOMIC DNA]</scope>
</reference>